<organism>
    <name type="scientific">Homo sapiens</name>
    <name type="common">Human</name>
    <dbReference type="NCBI Taxonomy" id="9606"/>
    <lineage>
        <taxon>Eukaryota</taxon>
        <taxon>Metazoa</taxon>
        <taxon>Chordata</taxon>
        <taxon>Craniata</taxon>
        <taxon>Vertebrata</taxon>
        <taxon>Euteleostomi</taxon>
        <taxon>Mammalia</taxon>
        <taxon>Eutheria</taxon>
        <taxon>Euarchontoglires</taxon>
        <taxon>Primates</taxon>
        <taxon>Haplorrhini</taxon>
        <taxon>Catarrhini</taxon>
        <taxon>Hominidae</taxon>
        <taxon>Homo</taxon>
    </lineage>
</organism>
<sequence length="1610" mass="170668">MKKEGSSGSFRLQPNTGSLSRAVSWINFSSLSRQTKRLFRSDGELSVCGQQVEVDDENWIYRAQPRKAVSNLDEESRWTVHYTAPWHQQENVFLPTTRPPCVEDLHRQAKLNLKSVLRECDKLRHDGYRSSQYYSQGPTFAANASPFCDDYQDEDEETDQKCSLSSSEEERFISIRRPKTPASSDFSDLNTQTNWTKSLPLPTPEEKMRQQAQTVQADVVPINITASGTGQDDADGHSVYTPDHYSTLGRFNSCRSAGQRSETRDSSCQTEDVKVVPPSMRRIRAQKGQGIAAQMGHFSGSSGNMSVLSDSAGIVFPSRLDSDAGFHSLPRSGARANIQSLEPRLGALGPAGDMNGTFLYQRGHPQADENLGHLGGASGTGTLLRPKSQELRHFESENIMSPACVVSPHATYSTSIIPNATLSSSSEVIAIPTAQSAGQRESKSSGSSHARIKSRDHLISRHAVKGDPQSPGRHWNEGHATILSQDLDPHSPGEPALLSLCDSAVPLNAPANRENGSQAMPYNCRNNLAFPAHPQDVDGKSESSYSGGGGHSSSEPWEYKSSGNGRASPLKPHLATPGYSTPTSNMSSCSLDQTSNKEDAGSLYSEDHDGYCASVHTDSGHGSGNLCNSSDGFGNPRHSVINVFVGRAQKNQGDRSNYQDKSLSRNISLKKAKKPPLPPSRTDSLRRIPKKSSQCNGQVLNESLIATLQHSLQLSLPGKSGSSPSQSPCSDLEEPWLPRSRSQSTVSAGSSMTSATTPNVYSLCGATPSQSDTSSVKSEYTDPWGYYIDYTGMQEDPGNPAGGCSTSSGVPTGNGPVRHVQEGSRATMPQVPGGSVKPKIMSPEKSHRVISPSSGYSSQSNTPTALTPVPVFLKSVSPANGKGKPKPKVPERKSSLISSVSISSSSTSLSSSTSTEGSGTMKKLDPAVGSPPAPPPPPVPSPPFPCPADRSPFLPPPPPVTDCSQGSPLPHSPVFPPPPPEALIPFCSPPDWCLSPPRPALSPILPDSPVSLPLPPPLLPSSEPPPAPPLDPKFMKDTRPPFTNSGQPESSRGSLRPPSTKEETSRPPMPLITTEALQMVQLRPVRKNSGAEAAQLSERTAQEQRTPVAPQYHLKPSAFLKSRNSTNEMESESQPASVTSSLPTPAKSSSQGDHGSAAERGGPVSRSPGAPSAGEAEARPSPSTTPLPDSSPSRKPPPISKKPKLFLVVPPPQKDFAVEPAENVSEALRAVPSPTTGEEGSVHSREAKESSAAQAGSHATHPGTSVLEGGAAGSMSPSRVEANVPMVQPDVSPAPKQEEPAENSADTGGDGESCLSQQDGAAGVPETNAAGSSSEACDFLKEDGNDEVMTPSRPRTTEDLFAAIHRSKRKVLGRRDSDDDHSRNHSPSPPVTPTGAAPSLASPKQVGSIQRSIRKSSTSSDNFKALLLKKGSRSDTSARMSAAEMLKNTDPRFQRSRSEPSPDAPESPSSCSPSKNRRAQEEWAKNEGLMPRSLSFSGPRYGRSRTPPSAASSRYSMRNRIQSSPMTVISEGEGEAVEPVDSIARGALGAAEGCSLDGLAREEMDEGGLLCGEGPAASLQPQAPGPVDGTASAEGREPSPQCGGSLSEES</sequence>
<comment type="alternative products">
    <event type="alternative splicing"/>
    <isoform>
        <id>Q5SYE7-1</id>
        <name>1</name>
        <sequence type="displayed"/>
    </isoform>
    <isoform>
        <id>Q5SYE7-2</id>
        <name>2</name>
        <sequence type="described" ref="VSP_040818 VSP_040819"/>
    </isoform>
</comment>
<comment type="tissue specificity">
    <text evidence="3">Widely expressed. Expressed in adult and fetal brain, fetal eyes, adult lens, kidney, liver and intestine.</text>
</comment>
<comment type="similarity">
    <text evidence="6">Belongs to the NHS family.</text>
</comment>
<gene>
    <name type="primary">NHSL1</name>
    <name type="synonym">C6orf63</name>
    <name type="synonym">KIAA1357</name>
</gene>
<protein>
    <recommendedName>
        <fullName>NHS-like protein 1</fullName>
    </recommendedName>
</protein>
<dbReference type="EMBL" id="AK307584">
    <property type="status" value="NOT_ANNOTATED_CDS"/>
    <property type="molecule type" value="mRNA"/>
</dbReference>
<dbReference type="EMBL" id="AL391669">
    <property type="status" value="NOT_ANNOTATED_CDS"/>
    <property type="molecule type" value="Genomic_DNA"/>
</dbReference>
<dbReference type="EMBL" id="AL591375">
    <property type="status" value="NOT_ANNOTATED_CDS"/>
    <property type="molecule type" value="Genomic_DNA"/>
</dbReference>
<dbReference type="EMBL" id="AB037778">
    <property type="protein sequence ID" value="BAA92595.1"/>
    <property type="molecule type" value="mRNA"/>
</dbReference>
<dbReference type="EMBL" id="BC045181">
    <property type="protein sequence ID" value="AAH45181.1"/>
    <property type="molecule type" value="mRNA"/>
</dbReference>
<dbReference type="CCDS" id="CCDS47487.1">
    <molecule id="Q5SYE7-2"/>
</dbReference>
<dbReference type="CCDS" id="CCDS55063.1">
    <molecule id="Q5SYE7-1"/>
</dbReference>
<dbReference type="RefSeq" id="NP_001137532.1">
    <molecule id="Q5SYE7-2"/>
    <property type="nucleotide sequence ID" value="NM_001144060.2"/>
</dbReference>
<dbReference type="RefSeq" id="NP_065197.1">
    <molecule id="Q5SYE7-1"/>
    <property type="nucleotide sequence ID" value="NM_020464.2"/>
</dbReference>
<dbReference type="RefSeq" id="XP_047275071.1">
    <molecule id="Q5SYE7-1"/>
    <property type="nucleotide sequence ID" value="XM_047419115.1"/>
</dbReference>
<dbReference type="RefSeq" id="XP_054211982.1">
    <molecule id="Q5SYE7-1"/>
    <property type="nucleotide sequence ID" value="XM_054356007.1"/>
</dbReference>
<dbReference type="BioGRID" id="121460">
    <property type="interactions" value="57"/>
</dbReference>
<dbReference type="DIP" id="DIP-47303N"/>
<dbReference type="FunCoup" id="Q5SYE7">
    <property type="interactions" value="397"/>
</dbReference>
<dbReference type="IntAct" id="Q5SYE7">
    <property type="interactions" value="36"/>
</dbReference>
<dbReference type="MINT" id="Q5SYE7"/>
<dbReference type="STRING" id="9606.ENSP00000394546"/>
<dbReference type="CarbonylDB" id="Q5SYE7"/>
<dbReference type="GlyGen" id="Q5SYE7">
    <property type="glycosylation" value="8 sites, 1 O-linked glycan (3 sites)"/>
</dbReference>
<dbReference type="iPTMnet" id="Q5SYE7"/>
<dbReference type="PhosphoSitePlus" id="Q5SYE7"/>
<dbReference type="BioMuta" id="NHSL1"/>
<dbReference type="DMDM" id="190360005"/>
<dbReference type="jPOST" id="Q5SYE7"/>
<dbReference type="MassIVE" id="Q5SYE7"/>
<dbReference type="PaxDb" id="9606-ENSP00000394546"/>
<dbReference type="PeptideAtlas" id="Q5SYE7"/>
<dbReference type="ProteomicsDB" id="64026">
    <molecule id="Q5SYE7-1"/>
</dbReference>
<dbReference type="ProteomicsDB" id="64027">
    <molecule id="Q5SYE7-2"/>
</dbReference>
<dbReference type="Pumba" id="Q5SYE7"/>
<dbReference type="Antibodypedia" id="33056">
    <property type="antibodies" value="66 antibodies from 12 providers"/>
</dbReference>
<dbReference type="DNASU" id="57224"/>
<dbReference type="Ensembl" id="ENST00000343505.10">
    <molecule id="Q5SYE7-2"/>
    <property type="protein sequence ID" value="ENSP00000344672.5"/>
    <property type="gene ID" value="ENSG00000135540.12"/>
</dbReference>
<dbReference type="Ensembl" id="ENST00000427025.6">
    <molecule id="Q5SYE7-1"/>
    <property type="protein sequence ID" value="ENSP00000394546.2"/>
    <property type="gene ID" value="ENSG00000135540.12"/>
</dbReference>
<dbReference type="GeneID" id="57224"/>
<dbReference type="KEGG" id="hsa:57224"/>
<dbReference type="MANE-Select" id="ENST00000343505.10">
    <molecule id="Q5SYE7-2"/>
    <property type="protein sequence ID" value="ENSP00000344672.5"/>
    <property type="RefSeq nucleotide sequence ID" value="NM_001144060.2"/>
    <property type="RefSeq protein sequence ID" value="NP_001137532.1"/>
</dbReference>
<dbReference type="UCSC" id="uc003qhx.4">
    <molecule id="Q5SYE7-1"/>
    <property type="organism name" value="human"/>
</dbReference>
<dbReference type="AGR" id="HGNC:21021"/>
<dbReference type="CTD" id="57224"/>
<dbReference type="DisGeNET" id="57224"/>
<dbReference type="GeneCards" id="NHSL1"/>
<dbReference type="HGNC" id="HGNC:21021">
    <property type="gene designation" value="NHSL1"/>
</dbReference>
<dbReference type="HPA" id="ENSG00000135540">
    <property type="expression patterns" value="Tissue enhanced (intestine)"/>
</dbReference>
<dbReference type="MIM" id="620171">
    <property type="type" value="gene"/>
</dbReference>
<dbReference type="neXtProt" id="NX_Q5SYE7"/>
<dbReference type="OpenTargets" id="ENSG00000135540"/>
<dbReference type="PharmGKB" id="PA134929320"/>
<dbReference type="VEuPathDB" id="HostDB:ENSG00000135540"/>
<dbReference type="eggNOG" id="ENOG502QTFI">
    <property type="taxonomic scope" value="Eukaryota"/>
</dbReference>
<dbReference type="GeneTree" id="ENSGT00950000182963"/>
<dbReference type="HOGENOM" id="CLU_003971_0_0_1"/>
<dbReference type="InParanoid" id="Q5SYE7"/>
<dbReference type="OMA" id="WAQEEWA"/>
<dbReference type="OrthoDB" id="8965057at2759"/>
<dbReference type="PAN-GO" id="Q5SYE7">
    <property type="GO annotations" value="1 GO annotation based on evolutionary models"/>
</dbReference>
<dbReference type="PhylomeDB" id="Q5SYE7"/>
<dbReference type="TreeFam" id="TF333323"/>
<dbReference type="PathwayCommons" id="Q5SYE7"/>
<dbReference type="SignaLink" id="Q5SYE7"/>
<dbReference type="BioGRID-ORCS" id="57224">
    <property type="hits" value="18 hits in 1145 CRISPR screens"/>
</dbReference>
<dbReference type="ChiTaRS" id="NHSL1">
    <property type="organism name" value="human"/>
</dbReference>
<dbReference type="GenomeRNAi" id="57224"/>
<dbReference type="Pharos" id="Q5SYE7">
    <property type="development level" value="Tdark"/>
</dbReference>
<dbReference type="PRO" id="PR:Q5SYE7"/>
<dbReference type="Proteomes" id="UP000005640">
    <property type="component" value="Chromosome 6"/>
</dbReference>
<dbReference type="RNAct" id="Q5SYE7">
    <property type="molecule type" value="protein"/>
</dbReference>
<dbReference type="Bgee" id="ENSG00000135540">
    <property type="expression patterns" value="Expressed in ileal mucosa and 180 other cell types or tissues"/>
</dbReference>
<dbReference type="ExpressionAtlas" id="Q5SYE7">
    <property type="expression patterns" value="baseline and differential"/>
</dbReference>
<dbReference type="GO" id="GO:0030154">
    <property type="term" value="P:cell differentiation"/>
    <property type="evidence" value="ECO:0000318"/>
    <property type="project" value="GO_Central"/>
</dbReference>
<dbReference type="InterPro" id="IPR024845">
    <property type="entry name" value="NHS-like"/>
</dbReference>
<dbReference type="PANTHER" id="PTHR23039">
    <property type="entry name" value="NANCE-HORAN SYNDROME PROTEIN"/>
    <property type="match status" value="1"/>
</dbReference>
<dbReference type="PANTHER" id="PTHR23039:SF3">
    <property type="entry name" value="NHS-LIKE PROTEIN 1"/>
    <property type="match status" value="1"/>
</dbReference>
<dbReference type="Pfam" id="PF15273">
    <property type="entry name" value="NHS"/>
    <property type="match status" value="2"/>
</dbReference>
<evidence type="ECO:0000250" key="1">
    <source>
        <dbReference type="UniProtKB" id="Q8CAF4"/>
    </source>
</evidence>
<evidence type="ECO:0000256" key="2">
    <source>
        <dbReference type="SAM" id="MobiDB-lite"/>
    </source>
</evidence>
<evidence type="ECO:0000269" key="3">
    <source>
    </source>
</evidence>
<evidence type="ECO:0000269" key="4">
    <source>
    </source>
</evidence>
<evidence type="ECO:0000303" key="5">
    <source>
    </source>
</evidence>
<evidence type="ECO:0000305" key="6"/>
<evidence type="ECO:0007744" key="7">
    <source>
    </source>
</evidence>
<evidence type="ECO:0007744" key="8">
    <source>
    </source>
</evidence>
<evidence type="ECO:0007744" key="9">
    <source>
    </source>
</evidence>
<evidence type="ECO:0007744" key="10">
    <source>
    </source>
</evidence>
<accession>Q5SYE7</accession>
<accession>Q3ZCS5</accession>
<accession>Q5SYE8</accession>
<accession>Q9P2J0</accession>
<proteinExistence type="evidence at protein level"/>
<name>NHSL1_HUMAN</name>
<feature type="chain" id="PRO_0000341353" description="NHS-like protein 1">
    <location>
        <begin position="1"/>
        <end position="1610"/>
    </location>
</feature>
<feature type="region of interest" description="Disordered" evidence="2">
    <location>
        <begin position="145"/>
        <end position="169"/>
    </location>
</feature>
<feature type="region of interest" description="Disordered" evidence="2">
    <location>
        <begin position="433"/>
        <end position="477"/>
    </location>
</feature>
<feature type="region of interest" description="Disordered" evidence="2">
    <location>
        <begin position="531"/>
        <end position="602"/>
    </location>
</feature>
<feature type="region of interest" description="Disordered" evidence="2">
    <location>
        <begin position="649"/>
        <end position="693"/>
    </location>
</feature>
<feature type="region of interest" description="Disordered" evidence="2">
    <location>
        <begin position="715"/>
        <end position="778"/>
    </location>
</feature>
<feature type="region of interest" description="Disordered" evidence="2">
    <location>
        <begin position="791"/>
        <end position="981"/>
    </location>
</feature>
<feature type="region of interest" description="Disordered" evidence="2">
    <location>
        <begin position="997"/>
        <end position="1535"/>
    </location>
</feature>
<feature type="region of interest" description="Disordered" evidence="2">
    <location>
        <begin position="1566"/>
        <end position="1610"/>
    </location>
</feature>
<feature type="compositionally biased region" description="Polar residues" evidence="2">
    <location>
        <begin position="433"/>
        <end position="448"/>
    </location>
</feature>
<feature type="compositionally biased region" description="Polar residues" evidence="2">
    <location>
        <begin position="578"/>
        <end position="594"/>
    </location>
</feature>
<feature type="compositionally biased region" description="Polar residues" evidence="2">
    <location>
        <begin position="649"/>
        <end position="667"/>
    </location>
</feature>
<feature type="compositionally biased region" description="Low complexity" evidence="2">
    <location>
        <begin position="715"/>
        <end position="730"/>
    </location>
</feature>
<feature type="compositionally biased region" description="Polar residues" evidence="2">
    <location>
        <begin position="740"/>
        <end position="760"/>
    </location>
</feature>
<feature type="compositionally biased region" description="Polar residues" evidence="2">
    <location>
        <begin position="767"/>
        <end position="778"/>
    </location>
</feature>
<feature type="compositionally biased region" description="Polar residues" evidence="2">
    <location>
        <begin position="851"/>
        <end position="865"/>
    </location>
</feature>
<feature type="compositionally biased region" description="Low complexity" evidence="2">
    <location>
        <begin position="895"/>
        <end position="928"/>
    </location>
</feature>
<feature type="compositionally biased region" description="Pro residues" evidence="2">
    <location>
        <begin position="929"/>
        <end position="946"/>
    </location>
</feature>
<feature type="compositionally biased region" description="Pro residues" evidence="2">
    <location>
        <begin position="970"/>
        <end position="981"/>
    </location>
</feature>
<feature type="compositionally biased region" description="Low complexity" evidence="2">
    <location>
        <begin position="1001"/>
        <end position="1011"/>
    </location>
</feature>
<feature type="compositionally biased region" description="Pro residues" evidence="2">
    <location>
        <begin position="1012"/>
        <end position="1031"/>
    </location>
</feature>
<feature type="compositionally biased region" description="Polar residues" evidence="2">
    <location>
        <begin position="1041"/>
        <end position="1053"/>
    </location>
</feature>
<feature type="compositionally biased region" description="Polar residues" evidence="2">
    <location>
        <begin position="1122"/>
        <end position="1153"/>
    </location>
</feature>
<feature type="compositionally biased region" description="Low complexity" evidence="2">
    <location>
        <begin position="1180"/>
        <end position="1193"/>
    </location>
</feature>
<feature type="compositionally biased region" description="Basic and acidic residues" evidence="2">
    <location>
        <begin position="1240"/>
        <end position="1249"/>
    </location>
</feature>
<feature type="compositionally biased region" description="Basic and acidic residues" evidence="2">
    <location>
        <begin position="1373"/>
        <end position="1383"/>
    </location>
</feature>
<feature type="compositionally biased region" description="Polar residues" evidence="2">
    <location>
        <begin position="1405"/>
        <end position="1422"/>
    </location>
</feature>
<feature type="compositionally biased region" description="Basic and acidic residues" evidence="2">
    <location>
        <begin position="1447"/>
        <end position="1460"/>
    </location>
</feature>
<feature type="compositionally biased region" description="Low complexity" evidence="2">
    <location>
        <begin position="1461"/>
        <end position="1474"/>
    </location>
</feature>
<feature type="compositionally biased region" description="Low complexity" evidence="2">
    <location>
        <begin position="1504"/>
        <end position="1516"/>
    </location>
</feature>
<feature type="modified residue" description="Phosphoserine" evidence="1">
    <location>
        <position position="24"/>
    </location>
</feature>
<feature type="modified residue" description="Phosphoserine" evidence="9">
    <location>
        <position position="198"/>
    </location>
</feature>
<feature type="modified residue" description="Phosphoserine" evidence="9 10">
    <location>
        <position position="328"/>
    </location>
</feature>
<feature type="modified residue" description="Phosphoserine" evidence="1">
    <location>
        <position position="568"/>
    </location>
</feature>
<feature type="modified residue" description="Phosphoserine" evidence="1">
    <location>
        <position position="639"/>
    </location>
</feature>
<feature type="modified residue" description="Phosphoserine" evidence="1">
    <location>
        <position position="1089"/>
    </location>
</feature>
<feature type="modified residue" description="Phosphoserine" evidence="7">
    <location>
        <position position="1167"/>
    </location>
</feature>
<feature type="modified residue" description="Phosphoserine" evidence="9">
    <location>
        <position position="1233"/>
    </location>
</feature>
<feature type="modified residue" description="Phosphoserine" evidence="7 8 10">
    <location>
        <position position="1386"/>
    </location>
</feature>
<feature type="modified residue" description="Phosphoserine" evidence="7 8 10">
    <location>
        <position position="1388"/>
    </location>
</feature>
<feature type="modified residue" description="Phosphothreonine" evidence="7 10">
    <location>
        <position position="1392"/>
    </location>
</feature>
<feature type="splice variant" id="VSP_040818" description="In isoform 2." evidence="5">
    <original>MKKEGSSGSFRLQPNTGSLSRAVSWINFSSLSRQTKRLFRSDGELSVCGQQVEVDDENWIYRAQPRKA</original>
    <variation>MVVFINAKIKSLIKLFKKKT</variation>
    <location>
        <begin position="1"/>
        <end position="68"/>
    </location>
</feature>
<feature type="splice variant" id="VSP_040819" description="In isoform 2." evidence="5">
    <original>T</original>
    <variation>TGENFDRQASLRRSLIYTDTLVRRPKKVKRRKTITGVPDNIQKEL</variation>
    <location>
        <position position="225"/>
    </location>
</feature>
<feature type="sequence variant" id="VAR_044055" description="In dbSNP:rs3734305.">
    <original>V</original>
    <variation>M</variation>
    <location>
        <position position="1085"/>
    </location>
</feature>
<feature type="sequence variant" id="VAR_044056" description="In dbSNP:rs11540147." evidence="4">
    <original>G</original>
    <variation>S</variation>
    <location>
        <position position="1585"/>
    </location>
</feature>
<feature type="sequence conflict" description="In Ref. 4; AAH45181." evidence="6" ref="4">
    <original>E</original>
    <variation>S</variation>
    <location>
        <position position="1487"/>
    </location>
</feature>
<feature type="sequence conflict" description="In Ref. 4; AAH45181." evidence="6" ref="4">
    <original>E</original>
    <variation>K</variation>
    <location>
        <position position="1608"/>
    </location>
</feature>
<keyword id="KW-0025">Alternative splicing</keyword>
<keyword id="KW-0597">Phosphoprotein</keyword>
<keyword id="KW-1267">Proteomics identification</keyword>
<keyword id="KW-1185">Reference proteome</keyword>
<reference key="1">
    <citation type="journal article" date="2004" name="Nat. Genet.">
        <title>Complete sequencing and characterization of 21,243 full-length human cDNAs.</title>
        <authorList>
            <person name="Ota T."/>
            <person name="Suzuki Y."/>
            <person name="Nishikawa T."/>
            <person name="Otsuki T."/>
            <person name="Sugiyama T."/>
            <person name="Irie R."/>
            <person name="Wakamatsu A."/>
            <person name="Hayashi K."/>
            <person name="Sato H."/>
            <person name="Nagai K."/>
            <person name="Kimura K."/>
            <person name="Makita H."/>
            <person name="Sekine M."/>
            <person name="Obayashi M."/>
            <person name="Nishi T."/>
            <person name="Shibahara T."/>
            <person name="Tanaka T."/>
            <person name="Ishii S."/>
            <person name="Yamamoto J."/>
            <person name="Saito K."/>
            <person name="Kawai Y."/>
            <person name="Isono Y."/>
            <person name="Nakamura Y."/>
            <person name="Nagahari K."/>
            <person name="Murakami K."/>
            <person name="Yasuda T."/>
            <person name="Iwayanagi T."/>
            <person name="Wagatsuma M."/>
            <person name="Shiratori A."/>
            <person name="Sudo H."/>
            <person name="Hosoiri T."/>
            <person name="Kaku Y."/>
            <person name="Kodaira H."/>
            <person name="Kondo H."/>
            <person name="Sugawara M."/>
            <person name="Takahashi M."/>
            <person name="Kanda K."/>
            <person name="Yokoi T."/>
            <person name="Furuya T."/>
            <person name="Kikkawa E."/>
            <person name="Omura Y."/>
            <person name="Abe K."/>
            <person name="Kamihara K."/>
            <person name="Katsuta N."/>
            <person name="Sato K."/>
            <person name="Tanikawa M."/>
            <person name="Yamazaki M."/>
            <person name="Ninomiya K."/>
            <person name="Ishibashi T."/>
            <person name="Yamashita H."/>
            <person name="Murakawa K."/>
            <person name="Fujimori K."/>
            <person name="Tanai H."/>
            <person name="Kimata M."/>
            <person name="Watanabe M."/>
            <person name="Hiraoka S."/>
            <person name="Chiba Y."/>
            <person name="Ishida S."/>
            <person name="Ono Y."/>
            <person name="Takiguchi S."/>
            <person name="Watanabe S."/>
            <person name="Yosida M."/>
            <person name="Hotuta T."/>
            <person name="Kusano J."/>
            <person name="Kanehori K."/>
            <person name="Takahashi-Fujii A."/>
            <person name="Hara H."/>
            <person name="Tanase T.-O."/>
            <person name="Nomura Y."/>
            <person name="Togiya S."/>
            <person name="Komai F."/>
            <person name="Hara R."/>
            <person name="Takeuchi K."/>
            <person name="Arita M."/>
            <person name="Imose N."/>
            <person name="Musashino K."/>
            <person name="Yuuki H."/>
            <person name="Oshima A."/>
            <person name="Sasaki N."/>
            <person name="Aotsuka S."/>
            <person name="Yoshikawa Y."/>
            <person name="Matsunawa H."/>
            <person name="Ichihara T."/>
            <person name="Shiohata N."/>
            <person name="Sano S."/>
            <person name="Moriya S."/>
            <person name="Momiyama H."/>
            <person name="Satoh N."/>
            <person name="Takami S."/>
            <person name="Terashima Y."/>
            <person name="Suzuki O."/>
            <person name="Nakagawa S."/>
            <person name="Senoh A."/>
            <person name="Mizoguchi H."/>
            <person name="Goto Y."/>
            <person name="Shimizu F."/>
            <person name="Wakebe H."/>
            <person name="Hishigaki H."/>
            <person name="Watanabe T."/>
            <person name="Sugiyama A."/>
            <person name="Takemoto M."/>
            <person name="Kawakami B."/>
            <person name="Yamazaki M."/>
            <person name="Watanabe K."/>
            <person name="Kumagai A."/>
            <person name="Itakura S."/>
            <person name="Fukuzumi Y."/>
            <person name="Fujimori Y."/>
            <person name="Komiyama M."/>
            <person name="Tashiro H."/>
            <person name="Tanigami A."/>
            <person name="Fujiwara T."/>
            <person name="Ono T."/>
            <person name="Yamada K."/>
            <person name="Fujii Y."/>
            <person name="Ozaki K."/>
            <person name="Hirao M."/>
            <person name="Ohmori Y."/>
            <person name="Kawabata A."/>
            <person name="Hikiji T."/>
            <person name="Kobatake N."/>
            <person name="Inagaki H."/>
            <person name="Ikema Y."/>
            <person name="Okamoto S."/>
            <person name="Okitani R."/>
            <person name="Kawakami T."/>
            <person name="Noguchi S."/>
            <person name="Itoh T."/>
            <person name="Shigeta K."/>
            <person name="Senba T."/>
            <person name="Matsumura K."/>
            <person name="Nakajima Y."/>
            <person name="Mizuno T."/>
            <person name="Morinaga M."/>
            <person name="Sasaki M."/>
            <person name="Togashi T."/>
            <person name="Oyama M."/>
            <person name="Hata H."/>
            <person name="Watanabe M."/>
            <person name="Komatsu T."/>
            <person name="Mizushima-Sugano J."/>
            <person name="Satoh T."/>
            <person name="Shirai Y."/>
            <person name="Takahashi Y."/>
            <person name="Nakagawa K."/>
            <person name="Okumura K."/>
            <person name="Nagase T."/>
            <person name="Nomura N."/>
            <person name="Kikuchi H."/>
            <person name="Masuho Y."/>
            <person name="Yamashita R."/>
            <person name="Nakai K."/>
            <person name="Yada T."/>
            <person name="Nakamura Y."/>
            <person name="Ohara O."/>
            <person name="Isogai T."/>
            <person name="Sugano S."/>
        </authorList>
    </citation>
    <scope>NUCLEOTIDE SEQUENCE [LARGE SCALE MRNA] (ISOFORM 2)</scope>
</reference>
<reference key="2">
    <citation type="journal article" date="2003" name="Nature">
        <title>The DNA sequence and analysis of human chromosome 6.</title>
        <authorList>
            <person name="Mungall A.J."/>
            <person name="Palmer S.A."/>
            <person name="Sims S.K."/>
            <person name="Edwards C.A."/>
            <person name="Ashurst J.L."/>
            <person name="Wilming L."/>
            <person name="Jones M.C."/>
            <person name="Horton R."/>
            <person name="Hunt S.E."/>
            <person name="Scott C.E."/>
            <person name="Gilbert J.G.R."/>
            <person name="Clamp M.E."/>
            <person name="Bethel G."/>
            <person name="Milne S."/>
            <person name="Ainscough R."/>
            <person name="Almeida J.P."/>
            <person name="Ambrose K.D."/>
            <person name="Andrews T.D."/>
            <person name="Ashwell R.I.S."/>
            <person name="Babbage A.K."/>
            <person name="Bagguley C.L."/>
            <person name="Bailey J."/>
            <person name="Banerjee R."/>
            <person name="Barker D.J."/>
            <person name="Barlow K.F."/>
            <person name="Bates K."/>
            <person name="Beare D.M."/>
            <person name="Beasley H."/>
            <person name="Beasley O."/>
            <person name="Bird C.P."/>
            <person name="Blakey S.E."/>
            <person name="Bray-Allen S."/>
            <person name="Brook J."/>
            <person name="Brown A.J."/>
            <person name="Brown J.Y."/>
            <person name="Burford D.C."/>
            <person name="Burrill W."/>
            <person name="Burton J."/>
            <person name="Carder C."/>
            <person name="Carter N.P."/>
            <person name="Chapman J.C."/>
            <person name="Clark S.Y."/>
            <person name="Clark G."/>
            <person name="Clee C.M."/>
            <person name="Clegg S."/>
            <person name="Cobley V."/>
            <person name="Collier R.E."/>
            <person name="Collins J.E."/>
            <person name="Colman L.K."/>
            <person name="Corby N.R."/>
            <person name="Coville G.J."/>
            <person name="Culley K.M."/>
            <person name="Dhami P."/>
            <person name="Davies J."/>
            <person name="Dunn M."/>
            <person name="Earthrowl M.E."/>
            <person name="Ellington A.E."/>
            <person name="Evans K.A."/>
            <person name="Faulkner L."/>
            <person name="Francis M.D."/>
            <person name="Frankish A."/>
            <person name="Frankland J."/>
            <person name="French L."/>
            <person name="Garner P."/>
            <person name="Garnett J."/>
            <person name="Ghori M.J."/>
            <person name="Gilby L.M."/>
            <person name="Gillson C.J."/>
            <person name="Glithero R.J."/>
            <person name="Grafham D.V."/>
            <person name="Grant M."/>
            <person name="Gribble S."/>
            <person name="Griffiths C."/>
            <person name="Griffiths M.N.D."/>
            <person name="Hall R."/>
            <person name="Halls K.S."/>
            <person name="Hammond S."/>
            <person name="Harley J.L."/>
            <person name="Hart E.A."/>
            <person name="Heath P.D."/>
            <person name="Heathcott R."/>
            <person name="Holmes S.J."/>
            <person name="Howden P.J."/>
            <person name="Howe K.L."/>
            <person name="Howell G.R."/>
            <person name="Huckle E."/>
            <person name="Humphray S.J."/>
            <person name="Humphries M.D."/>
            <person name="Hunt A.R."/>
            <person name="Johnson C.M."/>
            <person name="Joy A.A."/>
            <person name="Kay M."/>
            <person name="Keenan S.J."/>
            <person name="Kimberley A.M."/>
            <person name="King A."/>
            <person name="Laird G.K."/>
            <person name="Langford C."/>
            <person name="Lawlor S."/>
            <person name="Leongamornlert D.A."/>
            <person name="Leversha M."/>
            <person name="Lloyd C.R."/>
            <person name="Lloyd D.M."/>
            <person name="Loveland J.E."/>
            <person name="Lovell J."/>
            <person name="Martin S."/>
            <person name="Mashreghi-Mohammadi M."/>
            <person name="Maslen G.L."/>
            <person name="Matthews L."/>
            <person name="McCann O.T."/>
            <person name="McLaren S.J."/>
            <person name="McLay K."/>
            <person name="McMurray A."/>
            <person name="Moore M.J.F."/>
            <person name="Mullikin J.C."/>
            <person name="Niblett D."/>
            <person name="Nickerson T."/>
            <person name="Novik K.L."/>
            <person name="Oliver K."/>
            <person name="Overton-Larty E.K."/>
            <person name="Parker A."/>
            <person name="Patel R."/>
            <person name="Pearce A.V."/>
            <person name="Peck A.I."/>
            <person name="Phillimore B.J.C.T."/>
            <person name="Phillips S."/>
            <person name="Plumb R.W."/>
            <person name="Porter K.M."/>
            <person name="Ramsey Y."/>
            <person name="Ranby S.A."/>
            <person name="Rice C.M."/>
            <person name="Ross M.T."/>
            <person name="Searle S.M."/>
            <person name="Sehra H.K."/>
            <person name="Sheridan E."/>
            <person name="Skuce C.D."/>
            <person name="Smith S."/>
            <person name="Smith M."/>
            <person name="Spraggon L."/>
            <person name="Squares S.L."/>
            <person name="Steward C.A."/>
            <person name="Sycamore N."/>
            <person name="Tamlyn-Hall G."/>
            <person name="Tester J."/>
            <person name="Theaker A.J."/>
            <person name="Thomas D.W."/>
            <person name="Thorpe A."/>
            <person name="Tracey A."/>
            <person name="Tromans A."/>
            <person name="Tubby B."/>
            <person name="Wall M."/>
            <person name="Wallis J.M."/>
            <person name="West A.P."/>
            <person name="White S.S."/>
            <person name="Whitehead S.L."/>
            <person name="Whittaker H."/>
            <person name="Wild A."/>
            <person name="Willey D.J."/>
            <person name="Wilmer T.E."/>
            <person name="Wood J.M."/>
            <person name="Wray P.W."/>
            <person name="Wyatt J.C."/>
            <person name="Young L."/>
            <person name="Younger R.M."/>
            <person name="Bentley D.R."/>
            <person name="Coulson A."/>
            <person name="Durbin R.M."/>
            <person name="Hubbard T."/>
            <person name="Sulston J.E."/>
            <person name="Dunham I."/>
            <person name="Rogers J."/>
            <person name="Beck S."/>
        </authorList>
    </citation>
    <scope>NUCLEOTIDE SEQUENCE [LARGE SCALE GENOMIC DNA]</scope>
</reference>
<reference key="3">
    <citation type="journal article" date="1999" name="DNA Res.">
        <title>Prediction of the coding sequences of unidentified human genes. XV. The complete sequences of 100 new cDNA clones from brain which code for large proteins in vitro.</title>
        <authorList>
            <person name="Nagase T."/>
            <person name="Ishikawa K."/>
            <person name="Kikuno R."/>
            <person name="Hirosawa M."/>
            <person name="Nomura N."/>
            <person name="Ohara O."/>
        </authorList>
    </citation>
    <scope>NUCLEOTIDE SEQUENCE [LARGE SCALE MRNA] OF 775-1610</scope>
</reference>
<reference key="4">
    <citation type="journal article" date="2004" name="Genome Res.">
        <title>The status, quality, and expansion of the NIH full-length cDNA project: the Mammalian Gene Collection (MGC).</title>
        <authorList>
            <consortium name="The MGC Project Team"/>
        </authorList>
    </citation>
    <scope>NUCLEOTIDE SEQUENCE [LARGE SCALE MRNA] OF 1487-1610</scope>
    <scope>VARIANT SER-1585</scope>
    <source>
        <tissue>Brain</tissue>
    </source>
</reference>
<reference key="5">
    <citation type="journal article" date="2004" name="J. Med. Genet.">
        <title>Identification of the gene for Nance-Horan syndrome (NHS).</title>
        <authorList>
            <person name="Brooks S.P."/>
            <person name="Ebenezer N.D."/>
            <person name="Poopalasundaram S."/>
            <person name="Lehmann O.J."/>
            <person name="Moore A.T."/>
            <person name="Hardcastle A.J."/>
        </authorList>
    </citation>
    <scope>IDENTIFICATION</scope>
    <scope>TISSUE SPECIFICITY</scope>
</reference>
<reference key="6">
    <citation type="journal article" date="2008" name="J. Proteome Res.">
        <title>Combining protein-based IMAC, peptide-based IMAC, and MudPIT for efficient phosphoproteomic analysis.</title>
        <authorList>
            <person name="Cantin G.T."/>
            <person name="Yi W."/>
            <person name="Lu B."/>
            <person name="Park S.K."/>
            <person name="Xu T."/>
            <person name="Lee J.-D."/>
            <person name="Yates J.R. III"/>
        </authorList>
    </citation>
    <scope>IDENTIFICATION BY MASS SPECTROMETRY [LARGE SCALE ANALYSIS]</scope>
    <source>
        <tissue>Cervix carcinoma</tissue>
    </source>
</reference>
<reference key="7">
    <citation type="journal article" date="2008" name="Proc. Natl. Acad. Sci. U.S.A.">
        <title>A quantitative atlas of mitotic phosphorylation.</title>
        <authorList>
            <person name="Dephoure N."/>
            <person name="Zhou C."/>
            <person name="Villen J."/>
            <person name="Beausoleil S.A."/>
            <person name="Bakalarski C.E."/>
            <person name="Elledge S.J."/>
            <person name="Gygi S.P."/>
        </authorList>
    </citation>
    <scope>PHOSPHORYLATION [LARGE SCALE ANALYSIS] AT SER-1167; SER-1386; SER-1388 AND THR-1392</scope>
    <scope>IDENTIFICATION BY MASS SPECTROMETRY [LARGE SCALE ANALYSIS]</scope>
    <source>
        <tissue>Cervix carcinoma</tissue>
    </source>
</reference>
<reference key="8">
    <citation type="journal article" date="2009" name="Anal. Chem.">
        <title>Lys-N and trypsin cover complementary parts of the phosphoproteome in a refined SCX-based approach.</title>
        <authorList>
            <person name="Gauci S."/>
            <person name="Helbig A.O."/>
            <person name="Slijper M."/>
            <person name="Krijgsveld J."/>
            <person name="Heck A.J."/>
            <person name="Mohammed S."/>
        </authorList>
    </citation>
    <scope>IDENTIFICATION BY MASS SPECTROMETRY [LARGE SCALE ANALYSIS]</scope>
</reference>
<reference key="9">
    <citation type="journal article" date="2011" name="BMC Syst. Biol.">
        <title>Initial characterization of the human central proteome.</title>
        <authorList>
            <person name="Burkard T.R."/>
            <person name="Planyavsky M."/>
            <person name="Kaupe I."/>
            <person name="Breitwieser F.P."/>
            <person name="Buerckstuemmer T."/>
            <person name="Bennett K.L."/>
            <person name="Superti-Furga G."/>
            <person name="Colinge J."/>
        </authorList>
    </citation>
    <scope>IDENTIFICATION BY MASS SPECTROMETRY [LARGE SCALE ANALYSIS]</scope>
</reference>
<reference key="10">
    <citation type="journal article" date="2011" name="Sci. Signal.">
        <title>System-wide temporal characterization of the proteome and phosphoproteome of human embryonic stem cell differentiation.</title>
        <authorList>
            <person name="Rigbolt K.T."/>
            <person name="Prokhorova T.A."/>
            <person name="Akimov V."/>
            <person name="Henningsen J."/>
            <person name="Johansen P.T."/>
            <person name="Kratchmarova I."/>
            <person name="Kassem M."/>
            <person name="Mann M."/>
            <person name="Olsen J.V."/>
            <person name="Blagoev B."/>
        </authorList>
    </citation>
    <scope>PHOSPHORYLATION [LARGE SCALE ANALYSIS] AT SER-1386 AND SER-1388</scope>
    <scope>IDENTIFICATION BY MASS SPECTROMETRY [LARGE SCALE ANALYSIS]</scope>
</reference>
<reference key="11">
    <citation type="journal article" date="2013" name="J. Proteome Res.">
        <title>Toward a comprehensive characterization of a human cancer cell phosphoproteome.</title>
        <authorList>
            <person name="Zhou H."/>
            <person name="Di Palma S."/>
            <person name="Preisinger C."/>
            <person name="Peng M."/>
            <person name="Polat A.N."/>
            <person name="Heck A.J."/>
            <person name="Mohammed S."/>
        </authorList>
    </citation>
    <scope>PHOSPHORYLATION [LARGE SCALE ANALYSIS] AT SER-198; SER-328 AND SER-1233</scope>
    <scope>IDENTIFICATION BY MASS SPECTROMETRY [LARGE SCALE ANALYSIS]</scope>
    <source>
        <tissue>Cervix carcinoma</tissue>
    </source>
</reference>
<reference key="12">
    <citation type="journal article" date="2014" name="J. Proteomics">
        <title>An enzyme assisted RP-RPLC approach for in-depth analysis of human liver phosphoproteome.</title>
        <authorList>
            <person name="Bian Y."/>
            <person name="Song C."/>
            <person name="Cheng K."/>
            <person name="Dong M."/>
            <person name="Wang F."/>
            <person name="Huang J."/>
            <person name="Sun D."/>
            <person name="Wang L."/>
            <person name="Ye M."/>
            <person name="Zou H."/>
        </authorList>
    </citation>
    <scope>PHOSPHORYLATION [LARGE SCALE ANALYSIS] AT SER-328; SER-1386; SER-1388 AND THR-1392</scope>
    <scope>IDENTIFICATION BY MASS SPECTROMETRY [LARGE SCALE ANALYSIS]</scope>
    <source>
        <tissue>Liver</tissue>
    </source>
</reference>